<reference key="1">
    <citation type="journal article" date="1993" name="Yeast">
        <title>DNA sequence analysis of a 17 kb fragment of yeast chromosome XI physically localizes the MRB1 gene and reveals eight new open reading frames, including a homologue of the KIN1/KIN2 and SNF1 protein kinases.</title>
        <authorList>
            <person name="Pallier C."/>
            <person name="Valens M."/>
            <person name="Puzos V."/>
            <person name="Fukuhara H."/>
            <person name="Cheret G."/>
            <person name="Sor F."/>
            <person name="Bolotin-Fukuhara M."/>
        </authorList>
    </citation>
    <scope>NUCLEOTIDE SEQUENCE [GENOMIC DNA]</scope>
    <source>
        <strain>ATCC 204508 / S288c</strain>
    </source>
</reference>
<reference key="2">
    <citation type="journal article" date="1994" name="Nature">
        <title>Complete DNA sequence of yeast chromosome XI.</title>
        <authorList>
            <person name="Dujon B."/>
            <person name="Alexandraki D."/>
            <person name="Andre B."/>
            <person name="Ansorge W."/>
            <person name="Baladron V."/>
            <person name="Ballesta J.P.G."/>
            <person name="Banrevi A."/>
            <person name="Bolle P.-A."/>
            <person name="Bolotin-Fukuhara M."/>
            <person name="Bossier P."/>
            <person name="Bou G."/>
            <person name="Boyer J."/>
            <person name="Buitrago M.J."/>
            <person name="Cheret G."/>
            <person name="Colleaux L."/>
            <person name="Daignan-Fornier B."/>
            <person name="del Rey F."/>
            <person name="Dion C."/>
            <person name="Domdey H."/>
            <person name="Duesterhoeft A."/>
            <person name="Duesterhus S."/>
            <person name="Entian K.-D."/>
            <person name="Erfle H."/>
            <person name="Esteban P.F."/>
            <person name="Feldmann H."/>
            <person name="Fernandes L."/>
            <person name="Fobo G.M."/>
            <person name="Fritz C."/>
            <person name="Fukuhara H."/>
            <person name="Gabel C."/>
            <person name="Gaillon L."/>
            <person name="Garcia-Cantalejo J.M."/>
            <person name="Garcia-Ramirez J.J."/>
            <person name="Gent M.E."/>
            <person name="Ghazvini M."/>
            <person name="Goffeau A."/>
            <person name="Gonzalez A."/>
            <person name="Grothues D."/>
            <person name="Guerreiro P."/>
            <person name="Hegemann J.H."/>
            <person name="Hewitt N."/>
            <person name="Hilger F."/>
            <person name="Hollenberg C.P."/>
            <person name="Horaitis O."/>
            <person name="Indge K.J."/>
            <person name="Jacquier A."/>
            <person name="James C.M."/>
            <person name="Jauniaux J.-C."/>
            <person name="Jimenez A."/>
            <person name="Keuchel H."/>
            <person name="Kirchrath L."/>
            <person name="Kleine K."/>
            <person name="Koetter P."/>
            <person name="Legrain P."/>
            <person name="Liebl S."/>
            <person name="Louis E.J."/>
            <person name="Maia e Silva A."/>
            <person name="Marck C."/>
            <person name="Monnier A.-L."/>
            <person name="Moestl D."/>
            <person name="Mueller S."/>
            <person name="Obermaier B."/>
            <person name="Oliver S.G."/>
            <person name="Pallier C."/>
            <person name="Pascolo S."/>
            <person name="Pfeiffer F."/>
            <person name="Philippsen P."/>
            <person name="Planta R.J."/>
            <person name="Pohl F.M."/>
            <person name="Pohl T.M."/>
            <person name="Poehlmann R."/>
            <person name="Portetelle D."/>
            <person name="Purnelle B."/>
            <person name="Puzos V."/>
            <person name="Ramezani Rad M."/>
            <person name="Rasmussen S.W."/>
            <person name="Remacha M.A."/>
            <person name="Revuelta J.L."/>
            <person name="Richard G.-F."/>
            <person name="Rieger M."/>
            <person name="Rodrigues-Pousada C."/>
            <person name="Rose M."/>
            <person name="Rupp T."/>
            <person name="Santos M.A."/>
            <person name="Schwager C."/>
            <person name="Sensen C."/>
            <person name="Skala J."/>
            <person name="Soares H."/>
            <person name="Sor F."/>
            <person name="Stegemann J."/>
            <person name="Tettelin H."/>
            <person name="Thierry A."/>
            <person name="Tzermia M."/>
            <person name="Urrestarazu L.A."/>
            <person name="van Dyck L."/>
            <person name="van Vliet-Reedijk J.C."/>
            <person name="Valens M."/>
            <person name="Vandenbol M."/>
            <person name="Vilela C."/>
            <person name="Vissers S."/>
            <person name="von Wettstein D."/>
            <person name="Voss H."/>
            <person name="Wiemann S."/>
            <person name="Xu G."/>
            <person name="Zimmermann J."/>
            <person name="Haasemann M."/>
            <person name="Becker I."/>
            <person name="Mewes H.-W."/>
        </authorList>
    </citation>
    <scope>NUCLEOTIDE SEQUENCE [LARGE SCALE GENOMIC DNA]</scope>
    <source>
        <strain>ATCC 204508 / S288c</strain>
    </source>
</reference>
<reference key="3">
    <citation type="journal article" date="2014" name="G3 (Bethesda)">
        <title>The reference genome sequence of Saccharomyces cerevisiae: Then and now.</title>
        <authorList>
            <person name="Engel S.R."/>
            <person name="Dietrich F.S."/>
            <person name="Fisk D.G."/>
            <person name="Binkley G."/>
            <person name="Balakrishnan R."/>
            <person name="Costanzo M.C."/>
            <person name="Dwight S.S."/>
            <person name="Hitz B.C."/>
            <person name="Karra K."/>
            <person name="Nash R.S."/>
            <person name="Weng S."/>
            <person name="Wong E.D."/>
            <person name="Lloyd P."/>
            <person name="Skrzypek M.S."/>
            <person name="Miyasato S.R."/>
            <person name="Simison M."/>
            <person name="Cherry J.M."/>
        </authorList>
    </citation>
    <scope>GENOME REANNOTATION</scope>
    <source>
        <strain>ATCC 204508 / S288c</strain>
    </source>
</reference>
<reference key="4">
    <citation type="journal article" date="2002" name="Nature">
        <title>A large nucleolar U3 ribonucleoprotein required for 18S ribosomal RNA biogenesis.</title>
        <authorList>
            <person name="Dragon F."/>
            <person name="Gallagher J.E.G."/>
            <person name="Compagnone-Post P.A."/>
            <person name="Mitchell B.M."/>
            <person name="Porwancher K.A."/>
            <person name="Wehner K.A."/>
            <person name="Wormsley S."/>
            <person name="Settlage R.E."/>
            <person name="Shabanowitz J."/>
            <person name="Osheim Y."/>
            <person name="Beyer A.L."/>
            <person name="Hunt D.F."/>
            <person name="Baserga S.J."/>
        </authorList>
    </citation>
    <scope>FUNCTION</scope>
    <scope>INTERACTION WITH MPP10 AND SNORNA U3</scope>
    <scope>IDENTIFICATION IN SSU PROCESSOME BY MASS SPECTROMETRY</scope>
    <scope>SUBCELLULAR LOCATION</scope>
</reference>
<reference key="5">
    <citation type="journal article" date="2003" name="Nature">
        <title>Sequencing and comparison of yeast species to identify genes and regulatory elements.</title>
        <authorList>
            <person name="Kellis M."/>
            <person name="Patterson N."/>
            <person name="Endrizzi M."/>
            <person name="Birren B.W."/>
            <person name="Lander E.S."/>
        </authorList>
    </citation>
    <scope>IDENTIFICATION OF FRAMESHIFT</scope>
</reference>
<reference key="6">
    <citation type="journal article" date="2004" name="J. Biol. Chem.">
        <title>Ebp2p, the yeast homolog of Epstein-Barr virus nuclear antigen 1-binding protein 2, interacts with factors of both the 60 S and the 40 s ribosomal subunit assembly.</title>
        <authorList>
            <person name="Shirai C."/>
            <person name="Takai T."/>
            <person name="Nariai M."/>
            <person name="Horigome C."/>
            <person name="Mizuta K."/>
        </authorList>
    </citation>
    <scope>INTERACTION WITH EBP2; FAF1 AND RPS16A</scope>
</reference>
<reference key="7">
    <citation type="journal article" date="2007" name="RNA">
        <title>Yeast Rrp14p is a nucleolar protein involved in both ribosome biogenesis and cell polarity.</title>
        <authorList>
            <person name="Yamada H."/>
            <person name="Horigome C."/>
            <person name="Okada T."/>
            <person name="Shirai C."/>
            <person name="Mizuta K."/>
        </authorList>
    </citation>
    <scope>INTERACTION WITH RRP14</scope>
</reference>
<gene>
    <name type="primary">UTP11</name>
    <name type="ordered locus">YKL099C</name>
    <name type="ORF">YKL449</name>
</gene>
<feature type="chain" id="PRO_0000211052" description="U3 small nucleolar RNA-associated protein 11">
    <location>
        <begin position="1"/>
        <end position="250"/>
    </location>
</feature>
<feature type="region of interest" description="Disordered" evidence="1">
    <location>
        <begin position="1"/>
        <end position="23"/>
    </location>
</feature>
<feature type="region of interest" description="Disordered" evidence="1">
    <location>
        <begin position="219"/>
        <end position="250"/>
    </location>
</feature>
<feature type="compositionally biased region" description="Basic and acidic residues" evidence="1">
    <location>
        <begin position="1"/>
        <end position="10"/>
    </location>
</feature>
<keyword id="KW-0002">3D-structure</keyword>
<keyword id="KW-0539">Nucleus</keyword>
<keyword id="KW-1185">Reference proteome</keyword>
<keyword id="KW-0687">Ribonucleoprotein</keyword>
<keyword id="KW-0690">Ribosome biogenesis</keyword>
<keyword id="KW-0698">rRNA processing</keyword>
<proteinExistence type="evidence at protein level"/>
<sequence>MAKLVHDVQKKQHRERSQLTSRSRYGFLEKHKDYVKRAQDFHRKQSTLKVLREKAKERNPDEYYHAMHSRKTDAKGLLISSRHGDEEDESLSMDQVKLLKTQDSNYVRTLRQIELKKLEKGAKQLMFKSSGNHTIFVDSREKMNEFTPEKFFNTTSEMVNRSENRLTKDQLAQDISNNRNASSIMPKESLDKKKLKKFKQVKQHLQRETQLKQVQQRMDAQRELLKKGSKKKIVDSSGKISFKWKKQRKR</sequence>
<dbReference type="EMBL" id="X71133">
    <property type="protein sequence ID" value="CAA50458.1"/>
    <property type="status" value="ALT_FRAME"/>
    <property type="molecule type" value="Genomic_DNA"/>
</dbReference>
<dbReference type="EMBL" id="Z28099">
    <property type="protein sequence ID" value="CAA81939.1"/>
    <property type="status" value="ALT_FRAME"/>
    <property type="molecule type" value="Genomic_DNA"/>
</dbReference>
<dbReference type="EMBL" id="BK006944">
    <property type="protein sequence ID" value="DAA09058.1"/>
    <property type="molecule type" value="Genomic_DNA"/>
</dbReference>
<dbReference type="PIR" id="S37926">
    <property type="entry name" value="S37926"/>
</dbReference>
<dbReference type="RefSeq" id="NP_012823.2">
    <property type="nucleotide sequence ID" value="NM_001179665.1"/>
</dbReference>
<dbReference type="PDB" id="5WLC">
    <property type="method" value="EM"/>
    <property type="resolution" value="3.80 A"/>
    <property type="chains" value="SY=1-250"/>
</dbReference>
<dbReference type="PDB" id="6KE6">
    <property type="method" value="EM"/>
    <property type="resolution" value="3.40 A"/>
    <property type="chains" value="5D=1-250"/>
</dbReference>
<dbReference type="PDB" id="6LQP">
    <property type="method" value="EM"/>
    <property type="resolution" value="3.20 A"/>
    <property type="chains" value="5D=1-250"/>
</dbReference>
<dbReference type="PDB" id="6LQQ">
    <property type="method" value="EM"/>
    <property type="resolution" value="4.10 A"/>
    <property type="chains" value="5D=1-250"/>
</dbReference>
<dbReference type="PDB" id="6LQR">
    <property type="method" value="EM"/>
    <property type="resolution" value="8.60 A"/>
    <property type="chains" value="5D=1-250"/>
</dbReference>
<dbReference type="PDB" id="6LQS">
    <property type="method" value="EM"/>
    <property type="resolution" value="3.80 A"/>
    <property type="chains" value="5D=1-250"/>
</dbReference>
<dbReference type="PDB" id="6LQT">
    <property type="method" value="EM"/>
    <property type="resolution" value="4.90 A"/>
    <property type="chains" value="5D=1-250"/>
</dbReference>
<dbReference type="PDB" id="6LQU">
    <property type="method" value="EM"/>
    <property type="resolution" value="3.70 A"/>
    <property type="chains" value="5D=1-250"/>
</dbReference>
<dbReference type="PDB" id="6LQV">
    <property type="method" value="EM"/>
    <property type="resolution" value="4.80 A"/>
    <property type="chains" value="5D=1-250"/>
</dbReference>
<dbReference type="PDB" id="6ZQA">
    <property type="method" value="EM"/>
    <property type="resolution" value="4.40 A"/>
    <property type="chains" value="UK=1-250"/>
</dbReference>
<dbReference type="PDB" id="6ZQB">
    <property type="method" value="EM"/>
    <property type="resolution" value="3.90 A"/>
    <property type="chains" value="UK=1-250"/>
</dbReference>
<dbReference type="PDB" id="6ZQC">
    <property type="method" value="EM"/>
    <property type="resolution" value="3.80 A"/>
    <property type="chains" value="UK=1-250"/>
</dbReference>
<dbReference type="PDB" id="6ZQD">
    <property type="method" value="EM"/>
    <property type="resolution" value="3.80 A"/>
    <property type="chains" value="UK=1-250"/>
</dbReference>
<dbReference type="PDB" id="6ZQE">
    <property type="method" value="EM"/>
    <property type="resolution" value="7.10 A"/>
    <property type="chains" value="UK=1-250"/>
</dbReference>
<dbReference type="PDB" id="7AJT">
    <property type="method" value="EM"/>
    <property type="resolution" value="4.60 A"/>
    <property type="chains" value="UK=1-250"/>
</dbReference>
<dbReference type="PDB" id="7AJU">
    <property type="method" value="EM"/>
    <property type="resolution" value="3.80 A"/>
    <property type="chains" value="UK=1-250"/>
</dbReference>
<dbReference type="PDB" id="7D4I">
    <property type="method" value="EM"/>
    <property type="resolution" value="4.00 A"/>
    <property type="chains" value="5D=1-250"/>
</dbReference>
<dbReference type="PDB" id="7D5S">
    <property type="method" value="EM"/>
    <property type="resolution" value="4.60 A"/>
    <property type="chains" value="5D=1-250"/>
</dbReference>
<dbReference type="PDB" id="7D5T">
    <property type="method" value="EM"/>
    <property type="resolution" value="6.00 A"/>
    <property type="chains" value="5D=1-250"/>
</dbReference>
<dbReference type="PDB" id="7D63">
    <property type="method" value="EM"/>
    <property type="resolution" value="12.30 A"/>
    <property type="chains" value="5D=1-250"/>
</dbReference>
<dbReference type="PDB" id="7SUK">
    <property type="method" value="EM"/>
    <property type="resolution" value="3.99 A"/>
    <property type="chains" value="SY=3-250"/>
</dbReference>
<dbReference type="PDBsum" id="5WLC"/>
<dbReference type="PDBsum" id="6KE6"/>
<dbReference type="PDBsum" id="6LQP"/>
<dbReference type="PDBsum" id="6LQQ"/>
<dbReference type="PDBsum" id="6LQR"/>
<dbReference type="PDBsum" id="6LQS"/>
<dbReference type="PDBsum" id="6LQT"/>
<dbReference type="PDBsum" id="6LQU"/>
<dbReference type="PDBsum" id="6LQV"/>
<dbReference type="PDBsum" id="6ZQA"/>
<dbReference type="PDBsum" id="6ZQB"/>
<dbReference type="PDBsum" id="6ZQC"/>
<dbReference type="PDBsum" id="6ZQD"/>
<dbReference type="PDBsum" id="6ZQE"/>
<dbReference type="PDBsum" id="7AJT"/>
<dbReference type="PDBsum" id="7AJU"/>
<dbReference type="PDBsum" id="7D4I"/>
<dbReference type="PDBsum" id="7D5S"/>
<dbReference type="PDBsum" id="7D5T"/>
<dbReference type="PDBsum" id="7D63"/>
<dbReference type="PDBsum" id="7SUK"/>
<dbReference type="EMDB" id="EMD-0949"/>
<dbReference type="EMDB" id="EMD-0950"/>
<dbReference type="EMDB" id="EMD-0951"/>
<dbReference type="EMDB" id="EMD-0952"/>
<dbReference type="EMDB" id="EMD-0953"/>
<dbReference type="EMDB" id="EMD-0954"/>
<dbReference type="EMDB" id="EMD-0955"/>
<dbReference type="EMDB" id="EMD-11357"/>
<dbReference type="EMDB" id="EMD-11358"/>
<dbReference type="EMDB" id="EMD-11359"/>
<dbReference type="EMDB" id="EMD-11360"/>
<dbReference type="EMDB" id="EMD-11361"/>
<dbReference type="EMDB" id="EMD-11807"/>
<dbReference type="EMDB" id="EMD-11808"/>
<dbReference type="EMDB" id="EMD-30574"/>
<dbReference type="EMDB" id="EMD-30584"/>
<dbReference type="EMDB" id="EMD-30585"/>
<dbReference type="EMDB" id="EMD-30588"/>
<dbReference type="EMDB" id="EMD-9964"/>
<dbReference type="SMR" id="P34247"/>
<dbReference type="BioGRID" id="34034">
    <property type="interactions" value="104"/>
</dbReference>
<dbReference type="ComplexPortal" id="CPX-1604">
    <property type="entry name" value="Small ribosomal subunit processome"/>
</dbReference>
<dbReference type="DIP" id="DIP-6569N"/>
<dbReference type="FunCoup" id="P34247">
    <property type="interactions" value="874"/>
</dbReference>
<dbReference type="IntAct" id="P34247">
    <property type="interactions" value="77"/>
</dbReference>
<dbReference type="MINT" id="P34247"/>
<dbReference type="STRING" id="4932.YKL099C"/>
<dbReference type="iPTMnet" id="P34247"/>
<dbReference type="PaxDb" id="4932-YKL099C"/>
<dbReference type="PeptideAtlas" id="P34247"/>
<dbReference type="EnsemblFungi" id="YKL099C_mRNA">
    <property type="protein sequence ID" value="YKL099C"/>
    <property type="gene ID" value="YKL099C"/>
</dbReference>
<dbReference type="GeneID" id="853762"/>
<dbReference type="KEGG" id="sce:YKL099C"/>
<dbReference type="AGR" id="SGD:S000001582"/>
<dbReference type="SGD" id="S000001582">
    <property type="gene designation" value="UTP11"/>
</dbReference>
<dbReference type="VEuPathDB" id="FungiDB:YKL099C"/>
<dbReference type="eggNOG" id="KOG3237">
    <property type="taxonomic scope" value="Eukaryota"/>
</dbReference>
<dbReference type="GeneTree" id="ENSGT00390000005813"/>
<dbReference type="HOGENOM" id="CLU_061887_0_2_1"/>
<dbReference type="InParanoid" id="P34247"/>
<dbReference type="OMA" id="DLKYVVM"/>
<dbReference type="OrthoDB" id="29058at2759"/>
<dbReference type="BioCyc" id="YEAST:G3O-31889-MONOMER"/>
<dbReference type="Reactome" id="R-SCE-6791226">
    <property type="pathway name" value="Major pathway of rRNA processing in the nucleolus and cytosol"/>
</dbReference>
<dbReference type="BioGRID-ORCS" id="853762">
    <property type="hits" value="7 hits in 10 CRISPR screens"/>
</dbReference>
<dbReference type="PRO" id="PR:P34247"/>
<dbReference type="Proteomes" id="UP000002311">
    <property type="component" value="Chromosome XI"/>
</dbReference>
<dbReference type="RNAct" id="P34247">
    <property type="molecule type" value="protein"/>
</dbReference>
<dbReference type="GO" id="GO:0005730">
    <property type="term" value="C:nucleolus"/>
    <property type="evidence" value="ECO:0000314"/>
    <property type="project" value="SGD"/>
</dbReference>
<dbReference type="GO" id="GO:0005654">
    <property type="term" value="C:nucleoplasm"/>
    <property type="evidence" value="ECO:0000304"/>
    <property type="project" value="Reactome"/>
</dbReference>
<dbReference type="GO" id="GO:0032040">
    <property type="term" value="C:small-subunit processome"/>
    <property type="evidence" value="ECO:0000314"/>
    <property type="project" value="SGD"/>
</dbReference>
<dbReference type="GO" id="GO:0005732">
    <property type="term" value="C:sno(s)RNA-containing ribonucleoprotein complex"/>
    <property type="evidence" value="ECO:0000303"/>
    <property type="project" value="UniProtKB"/>
</dbReference>
<dbReference type="GO" id="GO:0000480">
    <property type="term" value="P:endonucleolytic cleavage in 5'-ETS of tricistronic rRNA transcript (SSU-rRNA, 5.8S rRNA, LSU-rRNA)"/>
    <property type="evidence" value="ECO:0000315"/>
    <property type="project" value="SGD"/>
</dbReference>
<dbReference type="GO" id="GO:0000447">
    <property type="term" value="P:endonucleolytic cleavage in ITS1 to separate SSU-rRNA from 5.8S rRNA and LSU-rRNA from tricistronic rRNA transcript (SSU-rRNA, 5.8S rRNA, LSU-rRNA)"/>
    <property type="evidence" value="ECO:0000315"/>
    <property type="project" value="SGD"/>
</dbReference>
<dbReference type="GO" id="GO:0000472">
    <property type="term" value="P:endonucleolytic cleavage to generate mature 5'-end of SSU-rRNA from (SSU-rRNA, 5.8S rRNA, LSU-rRNA)"/>
    <property type="evidence" value="ECO:0000315"/>
    <property type="project" value="SGD"/>
</dbReference>
<dbReference type="GO" id="GO:0030490">
    <property type="term" value="P:maturation of SSU-rRNA"/>
    <property type="evidence" value="ECO:0000303"/>
    <property type="project" value="ComplexPortal"/>
</dbReference>
<dbReference type="GO" id="GO:0006364">
    <property type="term" value="P:rRNA processing"/>
    <property type="evidence" value="ECO:0000315"/>
    <property type="project" value="UniProtKB"/>
</dbReference>
<dbReference type="GO" id="GO:0006412">
    <property type="term" value="P:translation"/>
    <property type="evidence" value="ECO:0000315"/>
    <property type="project" value="UniProtKB"/>
</dbReference>
<dbReference type="InterPro" id="IPR007144">
    <property type="entry name" value="SSU_processome_Utp11"/>
</dbReference>
<dbReference type="PANTHER" id="PTHR12838">
    <property type="entry name" value="U3 SMALL NUCLEOLAR RNA-ASSOCIATED PROTEIN 11"/>
    <property type="match status" value="1"/>
</dbReference>
<dbReference type="PANTHER" id="PTHR12838:SF0">
    <property type="entry name" value="U3 SMALL NUCLEOLAR RNA-ASSOCIATED PROTEIN 11-RELATED"/>
    <property type="match status" value="1"/>
</dbReference>
<dbReference type="Pfam" id="PF03998">
    <property type="entry name" value="Utp11"/>
    <property type="match status" value="1"/>
</dbReference>
<dbReference type="PIRSF" id="PIRSF015952">
    <property type="entry name" value="U3snoRNP11"/>
    <property type="match status" value="1"/>
</dbReference>
<accession>P34247</accession>
<accession>D6VXI8</accession>
<protein>
    <recommendedName>
        <fullName>U3 small nucleolar RNA-associated protein 11</fullName>
        <shortName>U3 snoRNA-associated protein 11</shortName>
    </recommendedName>
    <alternativeName>
        <fullName>U three protein 11</fullName>
    </alternativeName>
</protein>
<evidence type="ECO:0000256" key="1">
    <source>
        <dbReference type="SAM" id="MobiDB-lite"/>
    </source>
</evidence>
<evidence type="ECO:0000269" key="2">
    <source>
    </source>
</evidence>
<evidence type="ECO:0000269" key="3">
    <source>
    </source>
</evidence>
<evidence type="ECO:0000269" key="4">
    <source>
    </source>
</evidence>
<evidence type="ECO:0000305" key="5"/>
<comment type="function">
    <text evidence="2">Involved in nucleolar processing of pre-18S ribosomal RNA.</text>
</comment>
<comment type="subunit">
    <text evidence="2 3 4">Component of the ribosomal small subunit (SSU) processome composed of at least 40 protein subunits and snoRNA U3. Interacts with snoRNA U3. Interacts with EBP2, FAF1, MPP10, RPS16A and RRP14.</text>
</comment>
<comment type="subcellular location">
    <subcellularLocation>
        <location evidence="2">Nucleus</location>
        <location evidence="2">Nucleolus</location>
    </subcellularLocation>
</comment>
<comment type="similarity">
    <text evidence="5">Belongs to the UTP11 family.</text>
</comment>
<comment type="sequence caution" evidence="5">
    <conflict type="frameshift">
        <sequence resource="EMBL-CDS" id="CAA50458"/>
    </conflict>
</comment>
<comment type="sequence caution" evidence="5">
    <conflict type="frameshift">
        <sequence resource="EMBL-CDS" id="CAA81939"/>
    </conflict>
</comment>
<name>UTP11_YEAST</name>
<organism>
    <name type="scientific">Saccharomyces cerevisiae (strain ATCC 204508 / S288c)</name>
    <name type="common">Baker's yeast</name>
    <dbReference type="NCBI Taxonomy" id="559292"/>
    <lineage>
        <taxon>Eukaryota</taxon>
        <taxon>Fungi</taxon>
        <taxon>Dikarya</taxon>
        <taxon>Ascomycota</taxon>
        <taxon>Saccharomycotina</taxon>
        <taxon>Saccharomycetes</taxon>
        <taxon>Saccharomycetales</taxon>
        <taxon>Saccharomycetaceae</taxon>
        <taxon>Saccharomyces</taxon>
    </lineage>
</organism>